<protein>
    <recommendedName>
        <fullName evidence="1">Valine--tRNA ligase</fullName>
        <ecNumber evidence="1">6.1.1.9</ecNumber>
    </recommendedName>
    <alternativeName>
        <fullName evidence="1">Valyl-tRNA synthetase</fullName>
        <shortName evidence="1">ValRS</shortName>
    </alternativeName>
</protein>
<feature type="chain" id="PRO_0000224636" description="Valine--tRNA ligase">
    <location>
        <begin position="1"/>
        <end position="809"/>
    </location>
</feature>
<feature type="short sequence motif" description="'HIGH' region">
    <location>
        <begin position="60"/>
        <end position="70"/>
    </location>
</feature>
<feature type="short sequence motif" description="'KMSKS' region">
    <location>
        <begin position="546"/>
        <end position="550"/>
    </location>
</feature>
<feature type="binding site" evidence="1">
    <location>
        <position position="549"/>
    </location>
    <ligand>
        <name>ATP</name>
        <dbReference type="ChEBI" id="CHEBI:30616"/>
    </ligand>
</feature>
<comment type="function">
    <text evidence="1">Catalyzes the attachment of valine to tRNA(Val). As ValRS can inadvertently accommodate and process structurally similar amino acids such as threonine, to avoid such errors, it has a 'posttransfer' editing activity that hydrolyzes mischarged Thr-tRNA(Val) in a tRNA-dependent manner.</text>
</comment>
<comment type="catalytic activity">
    <reaction evidence="1">
        <text>tRNA(Val) + L-valine + ATP = L-valyl-tRNA(Val) + AMP + diphosphate</text>
        <dbReference type="Rhea" id="RHEA:10704"/>
        <dbReference type="Rhea" id="RHEA-COMP:9672"/>
        <dbReference type="Rhea" id="RHEA-COMP:9708"/>
        <dbReference type="ChEBI" id="CHEBI:30616"/>
        <dbReference type="ChEBI" id="CHEBI:33019"/>
        <dbReference type="ChEBI" id="CHEBI:57762"/>
        <dbReference type="ChEBI" id="CHEBI:78442"/>
        <dbReference type="ChEBI" id="CHEBI:78537"/>
        <dbReference type="ChEBI" id="CHEBI:456215"/>
        <dbReference type="EC" id="6.1.1.9"/>
    </reaction>
</comment>
<comment type="subcellular location">
    <subcellularLocation>
        <location evidence="1">Cytoplasm</location>
    </subcellularLocation>
</comment>
<comment type="domain">
    <text evidence="1">ValRS has two distinct active sites: one for aminoacylation and one for editing. The misactivated threonine is translocated from the active site to the editing site.</text>
</comment>
<comment type="similarity">
    <text evidence="1">Belongs to the class-I aminoacyl-tRNA synthetase family. ValS type 2 subfamily.</text>
</comment>
<organism>
    <name type="scientific">Sulfurisphaera tokodaii (strain DSM 16993 / JCM 10545 / NBRC 100140 / 7)</name>
    <name type="common">Sulfolobus tokodaii</name>
    <dbReference type="NCBI Taxonomy" id="273063"/>
    <lineage>
        <taxon>Archaea</taxon>
        <taxon>Thermoproteota</taxon>
        <taxon>Thermoprotei</taxon>
        <taxon>Sulfolobales</taxon>
        <taxon>Sulfolobaceae</taxon>
        <taxon>Sulfurisphaera</taxon>
    </lineage>
</organism>
<accession>Q972A3</accession>
<accession>F9VNY2</accession>
<reference key="1">
    <citation type="journal article" date="2001" name="DNA Res.">
        <title>Complete genome sequence of an aerobic thermoacidophilic Crenarchaeon, Sulfolobus tokodaii strain7.</title>
        <authorList>
            <person name="Kawarabayasi Y."/>
            <person name="Hino Y."/>
            <person name="Horikawa H."/>
            <person name="Jin-no K."/>
            <person name="Takahashi M."/>
            <person name="Sekine M."/>
            <person name="Baba S."/>
            <person name="Ankai A."/>
            <person name="Kosugi H."/>
            <person name="Hosoyama A."/>
            <person name="Fukui S."/>
            <person name="Nagai Y."/>
            <person name="Nishijima K."/>
            <person name="Otsuka R."/>
            <person name="Nakazawa H."/>
            <person name="Takamiya M."/>
            <person name="Kato Y."/>
            <person name="Yoshizawa T."/>
            <person name="Tanaka T."/>
            <person name="Kudoh Y."/>
            <person name="Yamazaki J."/>
            <person name="Kushida N."/>
            <person name="Oguchi A."/>
            <person name="Aoki K."/>
            <person name="Masuda S."/>
            <person name="Yanagii M."/>
            <person name="Nishimura M."/>
            <person name="Yamagishi A."/>
            <person name="Oshima T."/>
            <person name="Kikuchi H."/>
        </authorList>
    </citation>
    <scope>NUCLEOTIDE SEQUENCE [LARGE SCALE GENOMIC DNA]</scope>
    <source>
        <strain>DSM 16993 / JCM 10545 / NBRC 100140 / 7</strain>
    </source>
</reference>
<proteinExistence type="inferred from homology"/>
<gene>
    <name evidence="1" type="primary">valS</name>
    <name type="ordered locus">STK_12240</name>
</gene>
<sequence>MLSQEEINKKLEEWPKHYNPKEIELKWQQIWLSKEYWEKVFRFKDEDEKSPVFVIDTPPPFTSGELHMGHAYWVTIADTIGRFKRLQGYNVLLPQGWDTQGLPTELKVQYRLKIPKENRELFLKKCVEWTEDMIKKMKEAMIRLGYRPEWERYEYRTYENSYRKIIQKSLLEMYKLGLIEIREGPVYWCPKCETALAQSEVGYLEKDGILAYIRFPLKDGGEIIIATTRPELLAATQAVAVHPEDERYKGLIGKIAIIPLFNKEVKIIGDDAVEKEFGTGAVMISTYGDPQDIKWQLKYNLPTTELIDEKGRIKNTNGLLDGLKIEEARKKIIELLKEKGYLVKIENFKHNVLSHTERSDCLSPIEFLVKKQIFIKTLQFKDKLLEEYKKMKFIPSRMAYYLEDWIKSLEWDWNISRQRVYGTPLPFWYCDNNHLIPAREEDLPLDPTKTKPPYEKCPQCGLPLKPVTDVADVWIDSSVTVIYLTGFYTDKRKFEKTFPASVRLQGTDIIRTWLFYTFFRTLVLTGNIPFKEVLINGQVLGPDGTRMSKSKGNVVNPLDKVDEFGADSIRLTLLDARIGDDFPFKWETVRGKKLLLQKLWNAGRLSYPFIGKKKFDRPSNLHPIDRWILQEHKRFVKKSIEAYNNYDFYQVVESLYSYFWETIADEYLELIKHRLFAEDLSALYTLSRVFKDLLIILHPIAPHITEEMYNRLYGDKISIILEGLPNVDDIEEDPNIDTLGKYIKTTTSTIRTLKIQNRIPIPVSINVKLVGPKEYIETIKRVEDDIIKTLKIEKIVYEEGEEIKAELLS</sequence>
<evidence type="ECO:0000255" key="1">
    <source>
        <dbReference type="HAMAP-Rule" id="MF_02005"/>
    </source>
</evidence>
<name>SYV_SULTO</name>
<dbReference type="EC" id="6.1.1.9" evidence="1"/>
<dbReference type="EMBL" id="BA000023">
    <property type="protein sequence ID" value="BAK54490.1"/>
    <property type="molecule type" value="Genomic_DNA"/>
</dbReference>
<dbReference type="RefSeq" id="WP_010979244.1">
    <property type="nucleotide sequence ID" value="NC_003106.2"/>
</dbReference>
<dbReference type="SMR" id="Q972A3"/>
<dbReference type="STRING" id="273063.STK_12240"/>
<dbReference type="GeneID" id="1459223"/>
<dbReference type="KEGG" id="sto:STK_12240"/>
<dbReference type="PATRIC" id="fig|273063.9.peg.1384"/>
<dbReference type="eggNOG" id="arCOG00808">
    <property type="taxonomic scope" value="Archaea"/>
</dbReference>
<dbReference type="OrthoDB" id="23906at2157"/>
<dbReference type="Proteomes" id="UP000001015">
    <property type="component" value="Chromosome"/>
</dbReference>
<dbReference type="GO" id="GO:0005829">
    <property type="term" value="C:cytosol"/>
    <property type="evidence" value="ECO:0007669"/>
    <property type="project" value="TreeGrafter"/>
</dbReference>
<dbReference type="GO" id="GO:0002161">
    <property type="term" value="F:aminoacyl-tRNA deacylase activity"/>
    <property type="evidence" value="ECO:0007669"/>
    <property type="project" value="InterPro"/>
</dbReference>
<dbReference type="GO" id="GO:0005524">
    <property type="term" value="F:ATP binding"/>
    <property type="evidence" value="ECO:0007669"/>
    <property type="project" value="UniProtKB-UniRule"/>
</dbReference>
<dbReference type="GO" id="GO:0004832">
    <property type="term" value="F:valine-tRNA ligase activity"/>
    <property type="evidence" value="ECO:0007669"/>
    <property type="project" value="UniProtKB-UniRule"/>
</dbReference>
<dbReference type="GO" id="GO:0006438">
    <property type="term" value="P:valyl-tRNA aminoacylation"/>
    <property type="evidence" value="ECO:0007669"/>
    <property type="project" value="UniProtKB-UniRule"/>
</dbReference>
<dbReference type="CDD" id="cd07962">
    <property type="entry name" value="Anticodon_Ia_Val"/>
    <property type="match status" value="1"/>
</dbReference>
<dbReference type="CDD" id="cd00817">
    <property type="entry name" value="ValRS_core"/>
    <property type="match status" value="1"/>
</dbReference>
<dbReference type="FunFam" id="3.40.50.620:FF:000192">
    <property type="entry name" value="Valine--tRNA ligase"/>
    <property type="match status" value="1"/>
</dbReference>
<dbReference type="Gene3D" id="3.40.50.620">
    <property type="entry name" value="HUPs"/>
    <property type="match status" value="2"/>
</dbReference>
<dbReference type="Gene3D" id="1.10.730.10">
    <property type="entry name" value="Isoleucyl-tRNA Synthetase, Domain 1"/>
    <property type="match status" value="1"/>
</dbReference>
<dbReference type="Gene3D" id="3.90.740.10">
    <property type="entry name" value="Valyl/Leucyl/Isoleucyl-tRNA synthetase, editing domain"/>
    <property type="match status" value="1"/>
</dbReference>
<dbReference type="HAMAP" id="MF_02005">
    <property type="entry name" value="Val_tRNA_synth_type2"/>
    <property type="match status" value="1"/>
</dbReference>
<dbReference type="InterPro" id="IPR001412">
    <property type="entry name" value="aa-tRNA-synth_I_CS"/>
</dbReference>
<dbReference type="InterPro" id="IPR002300">
    <property type="entry name" value="aa-tRNA-synth_Ia"/>
</dbReference>
<dbReference type="InterPro" id="IPR033705">
    <property type="entry name" value="Anticodon_Ia_Val"/>
</dbReference>
<dbReference type="InterPro" id="IPR013155">
    <property type="entry name" value="M/V/L/I-tRNA-synth_anticd-bd"/>
</dbReference>
<dbReference type="InterPro" id="IPR014729">
    <property type="entry name" value="Rossmann-like_a/b/a_fold"/>
</dbReference>
<dbReference type="InterPro" id="IPR009080">
    <property type="entry name" value="tRNAsynth_Ia_anticodon-bd"/>
</dbReference>
<dbReference type="InterPro" id="IPR009008">
    <property type="entry name" value="Val/Leu/Ile-tRNA-synth_edit"/>
</dbReference>
<dbReference type="InterPro" id="IPR022874">
    <property type="entry name" value="Valine-tRNA_ligase_type_2"/>
</dbReference>
<dbReference type="InterPro" id="IPR002303">
    <property type="entry name" value="Valyl-tRNA_ligase"/>
</dbReference>
<dbReference type="NCBIfam" id="NF009687">
    <property type="entry name" value="PRK13208.1"/>
    <property type="match status" value="1"/>
</dbReference>
<dbReference type="NCBIfam" id="TIGR00422">
    <property type="entry name" value="valS"/>
    <property type="match status" value="1"/>
</dbReference>
<dbReference type="PANTHER" id="PTHR11946:SF93">
    <property type="entry name" value="VALINE--TRNA LIGASE, CHLOROPLASTIC_MITOCHONDRIAL 2"/>
    <property type="match status" value="1"/>
</dbReference>
<dbReference type="PANTHER" id="PTHR11946">
    <property type="entry name" value="VALYL-TRNA SYNTHETASES"/>
    <property type="match status" value="1"/>
</dbReference>
<dbReference type="Pfam" id="PF08264">
    <property type="entry name" value="Anticodon_1"/>
    <property type="match status" value="1"/>
</dbReference>
<dbReference type="Pfam" id="PF00133">
    <property type="entry name" value="tRNA-synt_1"/>
    <property type="match status" value="1"/>
</dbReference>
<dbReference type="PRINTS" id="PR00986">
    <property type="entry name" value="TRNASYNTHVAL"/>
</dbReference>
<dbReference type="SUPFAM" id="SSF47323">
    <property type="entry name" value="Anticodon-binding domain of a subclass of class I aminoacyl-tRNA synthetases"/>
    <property type="match status" value="1"/>
</dbReference>
<dbReference type="SUPFAM" id="SSF52374">
    <property type="entry name" value="Nucleotidylyl transferase"/>
    <property type="match status" value="1"/>
</dbReference>
<dbReference type="SUPFAM" id="SSF50677">
    <property type="entry name" value="ValRS/IleRS/LeuRS editing domain"/>
    <property type="match status" value="1"/>
</dbReference>
<dbReference type="PROSITE" id="PS00178">
    <property type="entry name" value="AA_TRNA_LIGASE_I"/>
    <property type="match status" value="1"/>
</dbReference>
<keyword id="KW-0030">Aminoacyl-tRNA synthetase</keyword>
<keyword id="KW-0067">ATP-binding</keyword>
<keyword id="KW-0963">Cytoplasm</keyword>
<keyword id="KW-0436">Ligase</keyword>
<keyword id="KW-0547">Nucleotide-binding</keyword>
<keyword id="KW-0648">Protein biosynthesis</keyword>
<keyword id="KW-1185">Reference proteome</keyword>